<sequence length="185" mass="21434">MKLKKDKRREAIRQQIDSNPFITDHELSDLFQVSIQTIRLDRTYLNIPELRKRIKLVAEKNYDQISSIEEQEFIGDLIQVNPNVKAQSILDITSDSVFHKTGIARGHVLFAQANSLCVALIKQPTVLTHESSIQFIEKVKLNDTVRAEARVVNQTAKHYYVEVKSYVKHTLVFKGNFKMFYDKRG</sequence>
<accession>Q5HGK5</accession>
<reference key="1">
    <citation type="journal article" date="2005" name="J. Bacteriol.">
        <title>Insights on evolution of virulence and resistance from the complete genome analysis of an early methicillin-resistant Staphylococcus aureus strain and a biofilm-producing methicillin-resistant Staphylococcus epidermidis strain.</title>
        <authorList>
            <person name="Gill S.R."/>
            <person name="Fouts D.E."/>
            <person name="Archer G.L."/>
            <person name="Mongodin E.F."/>
            <person name="DeBoy R.T."/>
            <person name="Ravel J."/>
            <person name="Paulsen I.T."/>
            <person name="Kolonay J.F."/>
            <person name="Brinkac L.M."/>
            <person name="Beanan M.J."/>
            <person name="Dodson R.J."/>
            <person name="Daugherty S.C."/>
            <person name="Madupu R."/>
            <person name="Angiuoli S.V."/>
            <person name="Durkin A.S."/>
            <person name="Haft D.H."/>
            <person name="Vamathevan J.J."/>
            <person name="Khouri H."/>
            <person name="Utterback T.R."/>
            <person name="Lee C."/>
            <person name="Dimitrov G."/>
            <person name="Jiang L."/>
            <person name="Qin H."/>
            <person name="Weidman J."/>
            <person name="Tran K."/>
            <person name="Kang K.H."/>
            <person name="Hance I.R."/>
            <person name="Nelson K.E."/>
            <person name="Fraser C.M."/>
        </authorList>
    </citation>
    <scope>NUCLEOTIDE SEQUENCE [LARGE SCALE GENOMIC DNA]</scope>
    <source>
        <strain>COL</strain>
    </source>
</reference>
<protein>
    <recommendedName>
        <fullName evidence="1">Transcription factor FapR</fullName>
    </recommendedName>
    <alternativeName>
        <fullName evidence="1">Fatty acid and phospholipid biosynthesis regulator</fullName>
    </alternativeName>
</protein>
<gene>
    <name evidence="1" type="primary">fapR</name>
    <name type="ordered locus">SACOL1242</name>
</gene>
<organism>
    <name type="scientific">Staphylococcus aureus (strain COL)</name>
    <dbReference type="NCBI Taxonomy" id="93062"/>
    <lineage>
        <taxon>Bacteria</taxon>
        <taxon>Bacillati</taxon>
        <taxon>Bacillota</taxon>
        <taxon>Bacilli</taxon>
        <taxon>Bacillales</taxon>
        <taxon>Staphylococcaceae</taxon>
        <taxon>Staphylococcus</taxon>
    </lineage>
</organism>
<dbReference type="EMBL" id="CP000046">
    <property type="protein sequence ID" value="AAW38076.1"/>
    <property type="status" value="ALT_INIT"/>
    <property type="molecule type" value="Genomic_DNA"/>
</dbReference>
<dbReference type="SMR" id="Q5HGK5"/>
<dbReference type="KEGG" id="sac:SACOL1242"/>
<dbReference type="HOGENOM" id="CLU_095708_0_0_9"/>
<dbReference type="Proteomes" id="UP000000530">
    <property type="component" value="Chromosome"/>
</dbReference>
<dbReference type="GO" id="GO:0003677">
    <property type="term" value="F:DNA binding"/>
    <property type="evidence" value="ECO:0007669"/>
    <property type="project" value="UniProtKB-KW"/>
</dbReference>
<dbReference type="GO" id="GO:0003700">
    <property type="term" value="F:DNA-binding transcription factor activity"/>
    <property type="evidence" value="ECO:0007669"/>
    <property type="project" value="UniProtKB-UniRule"/>
</dbReference>
<dbReference type="GO" id="GO:0006633">
    <property type="term" value="P:fatty acid biosynthetic process"/>
    <property type="evidence" value="ECO:0007669"/>
    <property type="project" value="UniProtKB-KW"/>
</dbReference>
<dbReference type="GO" id="GO:0045892">
    <property type="term" value="P:negative regulation of DNA-templated transcription"/>
    <property type="evidence" value="ECO:0007669"/>
    <property type="project" value="UniProtKB-UniRule"/>
</dbReference>
<dbReference type="GO" id="GO:0045717">
    <property type="term" value="P:negative regulation of fatty acid biosynthetic process"/>
    <property type="evidence" value="ECO:0007669"/>
    <property type="project" value="UniProtKB-UniRule"/>
</dbReference>
<dbReference type="CDD" id="cd03440">
    <property type="entry name" value="hot_dog"/>
    <property type="match status" value="1"/>
</dbReference>
<dbReference type="Gene3D" id="3.10.129.10">
    <property type="entry name" value="Hotdog Thioesterase"/>
    <property type="match status" value="1"/>
</dbReference>
<dbReference type="Gene3D" id="1.10.10.10">
    <property type="entry name" value="Winged helix-like DNA-binding domain superfamily/Winged helix DNA-binding domain"/>
    <property type="match status" value="1"/>
</dbReference>
<dbReference type="HAMAP" id="MF_01814">
    <property type="entry name" value="Transcrip_fact_FapR"/>
    <property type="match status" value="1"/>
</dbReference>
<dbReference type="InterPro" id="IPR029069">
    <property type="entry name" value="HotDog_dom_sf"/>
</dbReference>
<dbReference type="InterPro" id="IPR006683">
    <property type="entry name" value="Thioestr_dom"/>
</dbReference>
<dbReference type="InterPro" id="IPR017275">
    <property type="entry name" value="Transcription_factor_FapR"/>
</dbReference>
<dbReference type="InterPro" id="IPR036388">
    <property type="entry name" value="WH-like_DNA-bd_sf"/>
</dbReference>
<dbReference type="NCBIfam" id="NF003359">
    <property type="entry name" value="PRK04424.1"/>
    <property type="match status" value="1"/>
</dbReference>
<dbReference type="Pfam" id="PF03061">
    <property type="entry name" value="4HBT"/>
    <property type="match status" value="1"/>
</dbReference>
<dbReference type="PIRSF" id="PIRSF037733">
    <property type="entry name" value="Transcription_factor_FapR"/>
    <property type="match status" value="1"/>
</dbReference>
<dbReference type="SUPFAM" id="SSF54637">
    <property type="entry name" value="Thioesterase/thiol ester dehydrase-isomerase"/>
    <property type="match status" value="1"/>
</dbReference>
<name>FAPR_STAAC</name>
<proteinExistence type="inferred from homology"/>
<comment type="function">
    <text evidence="1">Transcriptional factor involved in regulation of membrane lipid biosynthesis by repressing genes involved in fatty acid and phospholipid metabolism.</text>
</comment>
<comment type="similarity">
    <text evidence="1">Belongs to the FapR family.</text>
</comment>
<comment type="sequence caution" evidence="2">
    <conflict type="erroneous initiation">
        <sequence resource="EMBL-CDS" id="AAW38076"/>
    </conflict>
</comment>
<keyword id="KW-0238">DNA-binding</keyword>
<keyword id="KW-0275">Fatty acid biosynthesis</keyword>
<keyword id="KW-0276">Fatty acid metabolism</keyword>
<keyword id="KW-0444">Lipid biosynthesis</keyword>
<keyword id="KW-0443">Lipid metabolism</keyword>
<keyword id="KW-0678">Repressor</keyword>
<keyword id="KW-0804">Transcription</keyword>
<keyword id="KW-0805">Transcription regulation</keyword>
<evidence type="ECO:0000255" key="1">
    <source>
        <dbReference type="HAMAP-Rule" id="MF_01814"/>
    </source>
</evidence>
<evidence type="ECO:0000305" key="2"/>
<feature type="chain" id="PRO_0000172827" description="Transcription factor FapR">
    <location>
        <begin position="1"/>
        <end position="185"/>
    </location>
</feature>